<proteinExistence type="inferred from homology"/>
<accession>C5CNM3</accession>
<name>CCA_VARPS</name>
<gene>
    <name evidence="1" type="primary">cca</name>
    <name type="ordered locus">Vapar_0988</name>
</gene>
<keyword id="KW-0067">ATP-binding</keyword>
<keyword id="KW-0378">Hydrolase</keyword>
<keyword id="KW-0460">Magnesium</keyword>
<keyword id="KW-0479">Metal-binding</keyword>
<keyword id="KW-0511">Multifunctional enzyme</keyword>
<keyword id="KW-0533">Nickel</keyword>
<keyword id="KW-0547">Nucleotide-binding</keyword>
<keyword id="KW-0548">Nucleotidyltransferase</keyword>
<keyword id="KW-0692">RNA repair</keyword>
<keyword id="KW-0694">RNA-binding</keyword>
<keyword id="KW-0808">Transferase</keyword>
<keyword id="KW-0819">tRNA processing</keyword>
<comment type="function">
    <text evidence="1">Catalyzes the addition and repair of the essential 3'-terminal CCA sequence in tRNAs without using a nucleic acid template. Adds these three nucleotides in the order of C, C, and A to the tRNA nucleotide-73, using CTP and ATP as substrates and producing inorganic pyrophosphate. tRNA 3'-terminal CCA addition is required both for tRNA processing and repair. Also involved in tRNA surveillance by mediating tandem CCA addition to generate a CCACCA at the 3' terminus of unstable tRNAs. While stable tRNAs receive only 3'-terminal CCA, unstable tRNAs are marked with CCACCA and rapidly degraded.</text>
</comment>
<comment type="catalytic activity">
    <reaction evidence="1">
        <text>a tRNA precursor + 2 CTP + ATP = a tRNA with a 3' CCA end + 3 diphosphate</text>
        <dbReference type="Rhea" id="RHEA:14433"/>
        <dbReference type="Rhea" id="RHEA-COMP:10465"/>
        <dbReference type="Rhea" id="RHEA-COMP:10468"/>
        <dbReference type="ChEBI" id="CHEBI:30616"/>
        <dbReference type="ChEBI" id="CHEBI:33019"/>
        <dbReference type="ChEBI" id="CHEBI:37563"/>
        <dbReference type="ChEBI" id="CHEBI:74896"/>
        <dbReference type="ChEBI" id="CHEBI:83071"/>
        <dbReference type="EC" id="2.7.7.72"/>
    </reaction>
</comment>
<comment type="catalytic activity">
    <reaction evidence="1">
        <text>a tRNA with a 3' CCA end + 2 CTP + ATP = a tRNA with a 3' CCACCA end + 3 diphosphate</text>
        <dbReference type="Rhea" id="RHEA:76235"/>
        <dbReference type="Rhea" id="RHEA-COMP:10468"/>
        <dbReference type="Rhea" id="RHEA-COMP:18655"/>
        <dbReference type="ChEBI" id="CHEBI:30616"/>
        <dbReference type="ChEBI" id="CHEBI:33019"/>
        <dbReference type="ChEBI" id="CHEBI:37563"/>
        <dbReference type="ChEBI" id="CHEBI:83071"/>
        <dbReference type="ChEBI" id="CHEBI:195187"/>
    </reaction>
    <physiologicalReaction direction="left-to-right" evidence="1">
        <dbReference type="Rhea" id="RHEA:76236"/>
    </physiologicalReaction>
</comment>
<comment type="cofactor">
    <cofactor evidence="1">
        <name>Mg(2+)</name>
        <dbReference type="ChEBI" id="CHEBI:18420"/>
    </cofactor>
    <text evidence="1">Magnesium is required for nucleotidyltransferase activity.</text>
</comment>
<comment type="cofactor">
    <cofactor evidence="1">
        <name>Ni(2+)</name>
        <dbReference type="ChEBI" id="CHEBI:49786"/>
    </cofactor>
    <text evidence="1">Nickel for phosphatase activity.</text>
</comment>
<comment type="subunit">
    <text evidence="1">Monomer. Can also form homodimers and oligomers.</text>
</comment>
<comment type="domain">
    <text evidence="1">Comprises two domains: an N-terminal domain containing the nucleotidyltransferase activity and a C-terminal HD domain associated with both phosphodiesterase and phosphatase activities.</text>
</comment>
<comment type="miscellaneous">
    <text evidence="1">A single active site specifically recognizes both ATP and CTP and is responsible for their addition.</text>
</comment>
<comment type="similarity">
    <text evidence="1">Belongs to the tRNA nucleotidyltransferase/poly(A) polymerase family. Bacterial CCA-adding enzyme type 1 subfamily.</text>
</comment>
<sequence length="419" mass="46307">MKTYLVGGALRDRLLGRPVSDHDWLVVGATPEEMAARGYLPVGRDFPVFLHPQTREEYALARTERKSAPGYRGFTVHASPDVTLEQDLARRDLTVNAIALPAEFVGTDGRFEPDAGKLADPFHGRRDLEHKLLRHVTDAFREDPVRILRVARFAARFDDFSVAPETMALMREMVQAGEADALVPERVWQELSRGLMETRPSRMFEVLRACGALAVLLPEVDRLWGVPQPEAHHPEVDCGVHLMMVIDTSAKLQASLPVRFACLMHDLGKGTTEPGLLPRHIGHEKRSAELLHAVCDRWRVPVEIRELAEVVAREHGNIHRSGELAAAALVRLLERCDAFRKPARFADVLLACECDARGRLGFEDRPYPQRERLLAVLATAAGVPTEAVARAAQQSGAAGPQIGEAIHRARVEAVAALPG</sequence>
<feature type="chain" id="PRO_1000214136" description="Multifunctional CCA protein">
    <location>
        <begin position="1"/>
        <end position="419"/>
    </location>
</feature>
<feature type="domain" description="HD" evidence="1">
    <location>
        <begin position="238"/>
        <end position="339"/>
    </location>
</feature>
<feature type="binding site" evidence="1">
    <location>
        <position position="8"/>
    </location>
    <ligand>
        <name>ATP</name>
        <dbReference type="ChEBI" id="CHEBI:30616"/>
    </ligand>
</feature>
<feature type="binding site" evidence="1">
    <location>
        <position position="8"/>
    </location>
    <ligand>
        <name>CTP</name>
        <dbReference type="ChEBI" id="CHEBI:37563"/>
    </ligand>
</feature>
<feature type="binding site" evidence="1">
    <location>
        <position position="11"/>
    </location>
    <ligand>
        <name>ATP</name>
        <dbReference type="ChEBI" id="CHEBI:30616"/>
    </ligand>
</feature>
<feature type="binding site" evidence="1">
    <location>
        <position position="11"/>
    </location>
    <ligand>
        <name>CTP</name>
        <dbReference type="ChEBI" id="CHEBI:37563"/>
    </ligand>
</feature>
<feature type="binding site" evidence="1">
    <location>
        <position position="21"/>
    </location>
    <ligand>
        <name>Mg(2+)</name>
        <dbReference type="ChEBI" id="CHEBI:18420"/>
    </ligand>
</feature>
<feature type="binding site" evidence="1">
    <location>
        <position position="23"/>
    </location>
    <ligand>
        <name>Mg(2+)</name>
        <dbReference type="ChEBI" id="CHEBI:18420"/>
    </ligand>
</feature>
<feature type="binding site" evidence="1">
    <location>
        <position position="91"/>
    </location>
    <ligand>
        <name>ATP</name>
        <dbReference type="ChEBI" id="CHEBI:30616"/>
    </ligand>
</feature>
<feature type="binding site" evidence="1">
    <location>
        <position position="91"/>
    </location>
    <ligand>
        <name>CTP</name>
        <dbReference type="ChEBI" id="CHEBI:37563"/>
    </ligand>
</feature>
<feature type="binding site" evidence="1">
    <location>
        <position position="149"/>
    </location>
    <ligand>
        <name>ATP</name>
        <dbReference type="ChEBI" id="CHEBI:30616"/>
    </ligand>
</feature>
<feature type="binding site" evidence="1">
    <location>
        <position position="149"/>
    </location>
    <ligand>
        <name>CTP</name>
        <dbReference type="ChEBI" id="CHEBI:37563"/>
    </ligand>
</feature>
<feature type="binding site" evidence="1">
    <location>
        <position position="152"/>
    </location>
    <ligand>
        <name>ATP</name>
        <dbReference type="ChEBI" id="CHEBI:30616"/>
    </ligand>
</feature>
<feature type="binding site" evidence="1">
    <location>
        <position position="152"/>
    </location>
    <ligand>
        <name>CTP</name>
        <dbReference type="ChEBI" id="CHEBI:37563"/>
    </ligand>
</feature>
<organism>
    <name type="scientific">Variovorax paradoxus (strain S110)</name>
    <dbReference type="NCBI Taxonomy" id="543728"/>
    <lineage>
        <taxon>Bacteria</taxon>
        <taxon>Pseudomonadati</taxon>
        <taxon>Pseudomonadota</taxon>
        <taxon>Betaproteobacteria</taxon>
        <taxon>Burkholderiales</taxon>
        <taxon>Comamonadaceae</taxon>
        <taxon>Variovorax</taxon>
    </lineage>
</organism>
<reference key="1">
    <citation type="journal article" date="2011" name="J. Bacteriol.">
        <title>Complete genome sequence of the metabolically versatile plant growth-promoting endophyte, Variovorax paradoxus S110.</title>
        <authorList>
            <person name="Han J.I."/>
            <person name="Choi H.K."/>
            <person name="Lee S.W."/>
            <person name="Orwin P.M."/>
            <person name="Kim J."/>
            <person name="Laroe S.L."/>
            <person name="Kim T.G."/>
            <person name="O'Neil J."/>
            <person name="Leadbetter J.R."/>
            <person name="Lee S.Y."/>
            <person name="Hur C.G."/>
            <person name="Spain J.C."/>
            <person name="Ovchinnikova G."/>
            <person name="Goodwin L."/>
            <person name="Han C."/>
        </authorList>
    </citation>
    <scope>NUCLEOTIDE SEQUENCE [LARGE SCALE GENOMIC DNA]</scope>
    <source>
        <strain>S110</strain>
    </source>
</reference>
<protein>
    <recommendedName>
        <fullName evidence="1">Multifunctional CCA protein</fullName>
    </recommendedName>
    <domain>
        <recommendedName>
            <fullName evidence="1">CCA-adding enzyme</fullName>
            <ecNumber evidence="1">2.7.7.72</ecNumber>
        </recommendedName>
        <alternativeName>
            <fullName evidence="1">CCA tRNA nucleotidyltransferase</fullName>
        </alternativeName>
        <alternativeName>
            <fullName evidence="1">tRNA CCA-pyrophosphorylase</fullName>
        </alternativeName>
        <alternativeName>
            <fullName evidence="1">tRNA adenylyl-/cytidylyl-transferase</fullName>
        </alternativeName>
        <alternativeName>
            <fullName evidence="1">tRNA nucleotidyltransferase</fullName>
        </alternativeName>
        <alternativeName>
            <fullName evidence="1">tRNA-NT</fullName>
        </alternativeName>
    </domain>
    <domain>
        <recommendedName>
            <fullName evidence="1">2'-nucleotidase</fullName>
            <ecNumber evidence="1">3.1.3.-</ecNumber>
        </recommendedName>
    </domain>
    <domain>
        <recommendedName>
            <fullName evidence="1">2',3'-cyclic phosphodiesterase</fullName>
            <ecNumber evidence="1">3.1.4.-</ecNumber>
        </recommendedName>
    </domain>
    <domain>
        <recommendedName>
            <fullName evidence="1">Phosphatase</fullName>
            <ecNumber evidence="1">3.1.3.-</ecNumber>
        </recommendedName>
    </domain>
</protein>
<dbReference type="EC" id="2.7.7.72" evidence="1"/>
<dbReference type="EC" id="3.1.3.-" evidence="1"/>
<dbReference type="EC" id="3.1.4.-" evidence="1"/>
<dbReference type="EMBL" id="CP001635">
    <property type="protein sequence ID" value="ACS17639.1"/>
    <property type="molecule type" value="Genomic_DNA"/>
</dbReference>
<dbReference type="SMR" id="C5CNM3"/>
<dbReference type="STRING" id="543728.Vapar_0988"/>
<dbReference type="KEGG" id="vap:Vapar_0988"/>
<dbReference type="eggNOG" id="COG0617">
    <property type="taxonomic scope" value="Bacteria"/>
</dbReference>
<dbReference type="HOGENOM" id="CLU_015961_1_1_4"/>
<dbReference type="OrthoDB" id="9805698at2"/>
<dbReference type="GO" id="GO:0005524">
    <property type="term" value="F:ATP binding"/>
    <property type="evidence" value="ECO:0007669"/>
    <property type="project" value="UniProtKB-UniRule"/>
</dbReference>
<dbReference type="GO" id="GO:0004810">
    <property type="term" value="F:CCA tRNA nucleotidyltransferase activity"/>
    <property type="evidence" value="ECO:0007669"/>
    <property type="project" value="UniProtKB-UniRule"/>
</dbReference>
<dbReference type="GO" id="GO:0004112">
    <property type="term" value="F:cyclic-nucleotide phosphodiesterase activity"/>
    <property type="evidence" value="ECO:0007669"/>
    <property type="project" value="UniProtKB-UniRule"/>
</dbReference>
<dbReference type="GO" id="GO:0000287">
    <property type="term" value="F:magnesium ion binding"/>
    <property type="evidence" value="ECO:0007669"/>
    <property type="project" value="UniProtKB-UniRule"/>
</dbReference>
<dbReference type="GO" id="GO:0016791">
    <property type="term" value="F:phosphatase activity"/>
    <property type="evidence" value="ECO:0007669"/>
    <property type="project" value="UniProtKB-UniRule"/>
</dbReference>
<dbReference type="GO" id="GO:0000049">
    <property type="term" value="F:tRNA binding"/>
    <property type="evidence" value="ECO:0007669"/>
    <property type="project" value="UniProtKB-UniRule"/>
</dbReference>
<dbReference type="GO" id="GO:0042245">
    <property type="term" value="P:RNA repair"/>
    <property type="evidence" value="ECO:0007669"/>
    <property type="project" value="UniProtKB-KW"/>
</dbReference>
<dbReference type="GO" id="GO:0001680">
    <property type="term" value="P:tRNA 3'-terminal CCA addition"/>
    <property type="evidence" value="ECO:0007669"/>
    <property type="project" value="UniProtKB-UniRule"/>
</dbReference>
<dbReference type="CDD" id="cd00077">
    <property type="entry name" value="HDc"/>
    <property type="match status" value="1"/>
</dbReference>
<dbReference type="CDD" id="cd05398">
    <property type="entry name" value="NT_ClassII-CCAase"/>
    <property type="match status" value="1"/>
</dbReference>
<dbReference type="Gene3D" id="3.30.460.10">
    <property type="entry name" value="Beta Polymerase, domain 2"/>
    <property type="match status" value="1"/>
</dbReference>
<dbReference type="Gene3D" id="1.10.3090.10">
    <property type="entry name" value="cca-adding enzyme, domain 2"/>
    <property type="match status" value="1"/>
</dbReference>
<dbReference type="HAMAP" id="MF_01261">
    <property type="entry name" value="CCA_bact_type1"/>
    <property type="match status" value="1"/>
</dbReference>
<dbReference type="InterPro" id="IPR012006">
    <property type="entry name" value="CCA_bact"/>
</dbReference>
<dbReference type="InterPro" id="IPR003607">
    <property type="entry name" value="HD/PDEase_dom"/>
</dbReference>
<dbReference type="InterPro" id="IPR006674">
    <property type="entry name" value="HD_domain"/>
</dbReference>
<dbReference type="InterPro" id="IPR043519">
    <property type="entry name" value="NT_sf"/>
</dbReference>
<dbReference type="InterPro" id="IPR002646">
    <property type="entry name" value="PolA_pol_head_dom"/>
</dbReference>
<dbReference type="InterPro" id="IPR032828">
    <property type="entry name" value="PolyA_RNA-bd"/>
</dbReference>
<dbReference type="InterPro" id="IPR050124">
    <property type="entry name" value="tRNA_CCA-adding_enzyme"/>
</dbReference>
<dbReference type="NCBIfam" id="NF008137">
    <property type="entry name" value="PRK10885.1"/>
    <property type="match status" value="1"/>
</dbReference>
<dbReference type="PANTHER" id="PTHR47545">
    <property type="entry name" value="MULTIFUNCTIONAL CCA PROTEIN"/>
    <property type="match status" value="1"/>
</dbReference>
<dbReference type="PANTHER" id="PTHR47545:SF1">
    <property type="entry name" value="MULTIFUNCTIONAL CCA PROTEIN"/>
    <property type="match status" value="1"/>
</dbReference>
<dbReference type="Pfam" id="PF01966">
    <property type="entry name" value="HD"/>
    <property type="match status" value="1"/>
</dbReference>
<dbReference type="Pfam" id="PF01743">
    <property type="entry name" value="PolyA_pol"/>
    <property type="match status" value="1"/>
</dbReference>
<dbReference type="Pfam" id="PF12627">
    <property type="entry name" value="PolyA_pol_RNAbd"/>
    <property type="match status" value="1"/>
</dbReference>
<dbReference type="PIRSF" id="PIRSF000813">
    <property type="entry name" value="CCA_bact"/>
    <property type="match status" value="1"/>
</dbReference>
<dbReference type="SUPFAM" id="SSF81301">
    <property type="entry name" value="Nucleotidyltransferase"/>
    <property type="match status" value="1"/>
</dbReference>
<dbReference type="SUPFAM" id="SSF81891">
    <property type="entry name" value="Poly A polymerase C-terminal region-like"/>
    <property type="match status" value="1"/>
</dbReference>
<dbReference type="PROSITE" id="PS51831">
    <property type="entry name" value="HD"/>
    <property type="match status" value="1"/>
</dbReference>
<evidence type="ECO:0000255" key="1">
    <source>
        <dbReference type="HAMAP-Rule" id="MF_01261"/>
    </source>
</evidence>